<accession>Q0HSD9</accession>
<proteinExistence type="inferred from homology"/>
<organism>
    <name type="scientific">Shewanella sp. (strain MR-7)</name>
    <dbReference type="NCBI Taxonomy" id="60481"/>
    <lineage>
        <taxon>Bacteria</taxon>
        <taxon>Pseudomonadati</taxon>
        <taxon>Pseudomonadota</taxon>
        <taxon>Gammaproteobacteria</taxon>
        <taxon>Alteromonadales</taxon>
        <taxon>Shewanellaceae</taxon>
        <taxon>Shewanella</taxon>
    </lineage>
</organism>
<feature type="chain" id="PRO_0000290766" description="Undecaprenyl-diphosphatase">
    <location>
        <begin position="1"/>
        <end position="266"/>
    </location>
</feature>
<feature type="transmembrane region" description="Helical" evidence="1">
    <location>
        <begin position="1"/>
        <end position="21"/>
    </location>
</feature>
<feature type="transmembrane region" description="Helical" evidence="1">
    <location>
        <begin position="39"/>
        <end position="59"/>
    </location>
</feature>
<feature type="transmembrane region" description="Helical" evidence="1">
    <location>
        <begin position="87"/>
        <end position="107"/>
    </location>
</feature>
<feature type="transmembrane region" description="Helical" evidence="1">
    <location>
        <begin position="111"/>
        <end position="131"/>
    </location>
</feature>
<feature type="transmembrane region" description="Helical" evidence="1">
    <location>
        <begin position="149"/>
        <end position="169"/>
    </location>
</feature>
<feature type="transmembrane region" description="Helical" evidence="1">
    <location>
        <begin position="183"/>
        <end position="203"/>
    </location>
</feature>
<feature type="transmembrane region" description="Helical" evidence="1">
    <location>
        <begin position="218"/>
        <end position="238"/>
    </location>
</feature>
<feature type="transmembrane region" description="Helical" evidence="1">
    <location>
        <begin position="246"/>
        <end position="266"/>
    </location>
</feature>
<dbReference type="EC" id="3.6.1.27" evidence="1"/>
<dbReference type="EMBL" id="CP000444">
    <property type="protein sequence ID" value="ABI43966.1"/>
    <property type="molecule type" value="Genomic_DNA"/>
</dbReference>
<dbReference type="SMR" id="Q0HSD9"/>
<dbReference type="KEGG" id="shm:Shewmr7_2982"/>
<dbReference type="HOGENOM" id="CLU_060296_1_0_6"/>
<dbReference type="GO" id="GO:0005886">
    <property type="term" value="C:plasma membrane"/>
    <property type="evidence" value="ECO:0007669"/>
    <property type="project" value="UniProtKB-SubCell"/>
</dbReference>
<dbReference type="GO" id="GO:0050380">
    <property type="term" value="F:undecaprenyl-diphosphatase activity"/>
    <property type="evidence" value="ECO:0007669"/>
    <property type="project" value="UniProtKB-UniRule"/>
</dbReference>
<dbReference type="GO" id="GO:0071555">
    <property type="term" value="P:cell wall organization"/>
    <property type="evidence" value="ECO:0007669"/>
    <property type="project" value="UniProtKB-KW"/>
</dbReference>
<dbReference type="GO" id="GO:0009252">
    <property type="term" value="P:peptidoglycan biosynthetic process"/>
    <property type="evidence" value="ECO:0007669"/>
    <property type="project" value="UniProtKB-KW"/>
</dbReference>
<dbReference type="GO" id="GO:0008360">
    <property type="term" value="P:regulation of cell shape"/>
    <property type="evidence" value="ECO:0007669"/>
    <property type="project" value="UniProtKB-KW"/>
</dbReference>
<dbReference type="GO" id="GO:0046677">
    <property type="term" value="P:response to antibiotic"/>
    <property type="evidence" value="ECO:0007669"/>
    <property type="project" value="UniProtKB-UniRule"/>
</dbReference>
<dbReference type="HAMAP" id="MF_01006">
    <property type="entry name" value="Undec_diphosphatase"/>
    <property type="match status" value="1"/>
</dbReference>
<dbReference type="InterPro" id="IPR003824">
    <property type="entry name" value="UppP"/>
</dbReference>
<dbReference type="NCBIfam" id="NF001393">
    <property type="entry name" value="PRK00281.2-4"/>
    <property type="match status" value="1"/>
</dbReference>
<dbReference type="NCBIfam" id="TIGR00753">
    <property type="entry name" value="undec_PP_bacA"/>
    <property type="match status" value="1"/>
</dbReference>
<dbReference type="PANTHER" id="PTHR30622">
    <property type="entry name" value="UNDECAPRENYL-DIPHOSPHATASE"/>
    <property type="match status" value="1"/>
</dbReference>
<dbReference type="PANTHER" id="PTHR30622:SF4">
    <property type="entry name" value="UNDECAPRENYL-DIPHOSPHATASE"/>
    <property type="match status" value="1"/>
</dbReference>
<dbReference type="Pfam" id="PF02673">
    <property type="entry name" value="BacA"/>
    <property type="match status" value="1"/>
</dbReference>
<gene>
    <name evidence="1" type="primary">uppP</name>
    <name type="ordered locus">Shewmr7_2982</name>
</gene>
<reference key="1">
    <citation type="submission" date="2006-08" db="EMBL/GenBank/DDBJ databases">
        <title>Complete sequence of chromosome 1 of Shewanella sp. MR-7.</title>
        <authorList>
            <person name="Copeland A."/>
            <person name="Lucas S."/>
            <person name="Lapidus A."/>
            <person name="Barry K."/>
            <person name="Detter J.C."/>
            <person name="Glavina del Rio T."/>
            <person name="Hammon N."/>
            <person name="Israni S."/>
            <person name="Dalin E."/>
            <person name="Tice H."/>
            <person name="Pitluck S."/>
            <person name="Kiss H."/>
            <person name="Brettin T."/>
            <person name="Bruce D."/>
            <person name="Han C."/>
            <person name="Tapia R."/>
            <person name="Gilna P."/>
            <person name="Schmutz J."/>
            <person name="Larimer F."/>
            <person name="Land M."/>
            <person name="Hauser L."/>
            <person name="Kyrpides N."/>
            <person name="Mikhailova N."/>
            <person name="Nealson K."/>
            <person name="Konstantinidis K."/>
            <person name="Klappenbach J."/>
            <person name="Tiedje J."/>
            <person name="Richardson P."/>
        </authorList>
    </citation>
    <scope>NUCLEOTIDE SEQUENCE [LARGE SCALE GENOMIC DNA]</scope>
    <source>
        <strain>MR-7</strain>
    </source>
</reference>
<protein>
    <recommendedName>
        <fullName evidence="1">Undecaprenyl-diphosphatase</fullName>
        <ecNumber evidence="1">3.6.1.27</ecNumber>
    </recommendedName>
    <alternativeName>
        <fullName evidence="1">Bacitracin resistance protein</fullName>
    </alternativeName>
    <alternativeName>
        <fullName evidence="1">Undecaprenyl pyrophosphate phosphatase</fullName>
    </alternativeName>
</protein>
<evidence type="ECO:0000255" key="1">
    <source>
        <dbReference type="HAMAP-Rule" id="MF_01006"/>
    </source>
</evidence>
<name>UPPP_SHESR</name>
<keyword id="KW-0046">Antibiotic resistance</keyword>
<keyword id="KW-0997">Cell inner membrane</keyword>
<keyword id="KW-1003">Cell membrane</keyword>
<keyword id="KW-0133">Cell shape</keyword>
<keyword id="KW-0961">Cell wall biogenesis/degradation</keyword>
<keyword id="KW-0378">Hydrolase</keyword>
<keyword id="KW-0472">Membrane</keyword>
<keyword id="KW-0573">Peptidoglycan synthesis</keyword>
<keyword id="KW-0812">Transmembrane</keyword>
<keyword id="KW-1133">Transmembrane helix</keyword>
<comment type="function">
    <text evidence="1">Catalyzes the dephosphorylation of undecaprenyl diphosphate (UPP). Confers resistance to bacitracin.</text>
</comment>
<comment type="catalytic activity">
    <reaction evidence="1">
        <text>di-trans,octa-cis-undecaprenyl diphosphate + H2O = di-trans,octa-cis-undecaprenyl phosphate + phosphate + H(+)</text>
        <dbReference type="Rhea" id="RHEA:28094"/>
        <dbReference type="ChEBI" id="CHEBI:15377"/>
        <dbReference type="ChEBI" id="CHEBI:15378"/>
        <dbReference type="ChEBI" id="CHEBI:43474"/>
        <dbReference type="ChEBI" id="CHEBI:58405"/>
        <dbReference type="ChEBI" id="CHEBI:60392"/>
        <dbReference type="EC" id="3.6.1.27"/>
    </reaction>
</comment>
<comment type="subcellular location">
    <subcellularLocation>
        <location evidence="1">Cell inner membrane</location>
        <topology evidence="1">Multi-pass membrane protein</topology>
    </subcellularLocation>
</comment>
<comment type="miscellaneous">
    <text>Bacitracin is thought to be involved in the inhibition of peptidoglycan synthesis by sequestering undecaprenyl diphosphate, thereby reducing the pool of lipid carrier available.</text>
</comment>
<comment type="similarity">
    <text evidence="1">Belongs to the UppP family.</text>
</comment>
<sequence length="266" mass="29191">MDTFQVIILALIQGLTEFLPISSSAHLILPAQLLGWEDQGLSFDVAVNTGSLFAVVIYFRNELWAMFKAWIASMVKGQHSDDSKLAWWIILATLPAVFFGFIAKDFIETHLRSAGVIAVTTIVFGLLLWWADKMSRRDLTVYQTGWRKALLIGFAQALALIPGTSRSGATMTAALMLGLSRDAAARFSFLMSVPVSLGAAILVGKDLAESPLPIDYQALTLGTVISFVAAYLCIHYFLKIISRMGMTPFVIYRLILGAVLCGFIFL</sequence>